<keyword id="KW-1003">Cell membrane</keyword>
<keyword id="KW-1015">Disulfide bond</keyword>
<keyword id="KW-0297">G-protein coupled receptor</keyword>
<keyword id="KW-0325">Glycoprotein</keyword>
<keyword id="KW-0472">Membrane</keyword>
<keyword id="KW-0552">Olfaction</keyword>
<keyword id="KW-0675">Receptor</keyword>
<keyword id="KW-1185">Reference proteome</keyword>
<keyword id="KW-0716">Sensory transduction</keyword>
<keyword id="KW-0807">Transducer</keyword>
<keyword id="KW-0812">Transmembrane</keyword>
<keyword id="KW-1133">Transmembrane helix</keyword>
<reference key="1">
    <citation type="journal article" date="2004" name="Nature">
        <title>DNA sequence and analysis of human chromosome 9.</title>
        <authorList>
            <person name="Humphray S.J."/>
            <person name="Oliver K."/>
            <person name="Hunt A.R."/>
            <person name="Plumb R.W."/>
            <person name="Loveland J.E."/>
            <person name="Howe K.L."/>
            <person name="Andrews T.D."/>
            <person name="Searle S."/>
            <person name="Hunt S.E."/>
            <person name="Scott C.E."/>
            <person name="Jones M.C."/>
            <person name="Ainscough R."/>
            <person name="Almeida J.P."/>
            <person name="Ambrose K.D."/>
            <person name="Ashwell R.I.S."/>
            <person name="Babbage A.K."/>
            <person name="Babbage S."/>
            <person name="Bagguley C.L."/>
            <person name="Bailey J."/>
            <person name="Banerjee R."/>
            <person name="Barker D.J."/>
            <person name="Barlow K.F."/>
            <person name="Bates K."/>
            <person name="Beasley H."/>
            <person name="Beasley O."/>
            <person name="Bird C.P."/>
            <person name="Bray-Allen S."/>
            <person name="Brown A.J."/>
            <person name="Brown J.Y."/>
            <person name="Burford D."/>
            <person name="Burrill W."/>
            <person name="Burton J."/>
            <person name="Carder C."/>
            <person name="Carter N.P."/>
            <person name="Chapman J.C."/>
            <person name="Chen Y."/>
            <person name="Clarke G."/>
            <person name="Clark S.Y."/>
            <person name="Clee C.M."/>
            <person name="Clegg S."/>
            <person name="Collier R.E."/>
            <person name="Corby N."/>
            <person name="Crosier M."/>
            <person name="Cummings A.T."/>
            <person name="Davies J."/>
            <person name="Dhami P."/>
            <person name="Dunn M."/>
            <person name="Dutta I."/>
            <person name="Dyer L.W."/>
            <person name="Earthrowl M.E."/>
            <person name="Faulkner L."/>
            <person name="Fleming C.J."/>
            <person name="Frankish A."/>
            <person name="Frankland J.A."/>
            <person name="French L."/>
            <person name="Fricker D.G."/>
            <person name="Garner P."/>
            <person name="Garnett J."/>
            <person name="Ghori J."/>
            <person name="Gilbert J.G.R."/>
            <person name="Glison C."/>
            <person name="Grafham D.V."/>
            <person name="Gribble S."/>
            <person name="Griffiths C."/>
            <person name="Griffiths-Jones S."/>
            <person name="Grocock R."/>
            <person name="Guy J."/>
            <person name="Hall R.E."/>
            <person name="Hammond S."/>
            <person name="Harley J.L."/>
            <person name="Harrison E.S.I."/>
            <person name="Hart E.A."/>
            <person name="Heath P.D."/>
            <person name="Henderson C.D."/>
            <person name="Hopkins B.L."/>
            <person name="Howard P.J."/>
            <person name="Howden P.J."/>
            <person name="Huckle E."/>
            <person name="Johnson C."/>
            <person name="Johnson D."/>
            <person name="Joy A.A."/>
            <person name="Kay M."/>
            <person name="Keenan S."/>
            <person name="Kershaw J.K."/>
            <person name="Kimberley A.M."/>
            <person name="King A."/>
            <person name="Knights A."/>
            <person name="Laird G.K."/>
            <person name="Langford C."/>
            <person name="Lawlor S."/>
            <person name="Leongamornlert D.A."/>
            <person name="Leversha M."/>
            <person name="Lloyd C."/>
            <person name="Lloyd D.M."/>
            <person name="Lovell J."/>
            <person name="Martin S."/>
            <person name="Mashreghi-Mohammadi M."/>
            <person name="Matthews L."/>
            <person name="McLaren S."/>
            <person name="McLay K.E."/>
            <person name="McMurray A."/>
            <person name="Milne S."/>
            <person name="Nickerson T."/>
            <person name="Nisbett J."/>
            <person name="Nordsiek G."/>
            <person name="Pearce A.V."/>
            <person name="Peck A.I."/>
            <person name="Porter K.M."/>
            <person name="Pandian R."/>
            <person name="Pelan S."/>
            <person name="Phillimore B."/>
            <person name="Povey S."/>
            <person name="Ramsey Y."/>
            <person name="Rand V."/>
            <person name="Scharfe M."/>
            <person name="Sehra H.K."/>
            <person name="Shownkeen R."/>
            <person name="Sims S.K."/>
            <person name="Skuce C.D."/>
            <person name="Smith M."/>
            <person name="Steward C.A."/>
            <person name="Swarbreck D."/>
            <person name="Sycamore N."/>
            <person name="Tester J."/>
            <person name="Thorpe A."/>
            <person name="Tracey A."/>
            <person name="Tromans A."/>
            <person name="Thomas D.W."/>
            <person name="Wall M."/>
            <person name="Wallis J.M."/>
            <person name="West A.P."/>
            <person name="Whitehead S.L."/>
            <person name="Willey D.L."/>
            <person name="Williams S.A."/>
            <person name="Wilming L."/>
            <person name="Wray P.W."/>
            <person name="Young L."/>
            <person name="Ashurst J.L."/>
            <person name="Coulson A."/>
            <person name="Blocker H."/>
            <person name="Durbin R.M."/>
            <person name="Sulston J.E."/>
            <person name="Hubbard T."/>
            <person name="Jackson M.J."/>
            <person name="Bentley D.R."/>
            <person name="Beck S."/>
            <person name="Rogers J."/>
            <person name="Dunham I."/>
        </authorList>
    </citation>
    <scope>NUCLEOTIDE SEQUENCE [LARGE SCALE GENOMIC DNA]</scope>
</reference>
<reference key="2">
    <citation type="journal article" date="2004" name="Genome Res.">
        <title>The status, quality, and expansion of the NIH full-length cDNA project: the Mammalian Gene Collection (MGC).</title>
        <authorList>
            <consortium name="The MGC Project Team"/>
        </authorList>
    </citation>
    <scope>NUCLEOTIDE SEQUENCE [LARGE SCALE MRNA]</scope>
    <source>
        <tissue>Brain cortex</tissue>
    </source>
</reference>
<reference key="3">
    <citation type="journal article" date="2002" name="Genomics">
        <title>DEFOG: a practical scheme for deciphering families of genes.</title>
        <authorList>
            <person name="Fuchs T."/>
            <person name="Malecova B."/>
            <person name="Linhart C."/>
            <person name="Sharan R."/>
            <person name="Khen M."/>
            <person name="Herwig R."/>
            <person name="Shmulevich D."/>
            <person name="Elkon R."/>
            <person name="Steinfath M."/>
            <person name="O'Brien J.K."/>
            <person name="Radelof U."/>
            <person name="Lehrach H."/>
            <person name="Lancet D."/>
            <person name="Shamir R."/>
        </authorList>
    </citation>
    <scope>NUCLEOTIDE SEQUENCE [GENOMIC DNA] OF 69-290</scope>
</reference>
<reference key="4">
    <citation type="journal article" date="2004" name="Proc. Natl. Acad. Sci. U.S.A.">
        <title>The human olfactory receptor gene family.</title>
        <authorList>
            <person name="Malnic B."/>
            <person name="Godfrey P.A."/>
            <person name="Buck L.B."/>
        </authorList>
    </citation>
    <scope>IDENTIFICATION</scope>
</reference>
<reference key="5">
    <citation type="journal article" date="2004" name="Proc. Natl. Acad. Sci. U.S.A.">
        <authorList>
            <person name="Malnic B."/>
            <person name="Godfrey P.A."/>
            <person name="Buck L.B."/>
        </authorList>
    </citation>
    <scope>ERRATUM OF PUBMED:14983052</scope>
</reference>
<organism>
    <name type="scientific">Homo sapiens</name>
    <name type="common">Human</name>
    <dbReference type="NCBI Taxonomy" id="9606"/>
    <lineage>
        <taxon>Eukaryota</taxon>
        <taxon>Metazoa</taxon>
        <taxon>Chordata</taxon>
        <taxon>Craniata</taxon>
        <taxon>Vertebrata</taxon>
        <taxon>Euteleostomi</taxon>
        <taxon>Mammalia</taxon>
        <taxon>Eutheria</taxon>
        <taxon>Euarchontoglires</taxon>
        <taxon>Primates</taxon>
        <taxon>Haplorrhini</taxon>
        <taxon>Catarrhini</taxon>
        <taxon>Hominidae</taxon>
        <taxon>Homo</taxon>
    </lineage>
</organism>
<name>OR2S1_HUMAN</name>
<accession>Q9NQN1</accession>
<accession>Q2M3L0</accession>
<accession>Q6IF19</accession>
<accession>Q96R42</accession>
<protein>
    <recommendedName>
        <fullName>Olfactory receptor 2S2</fullName>
    </recommendedName>
    <alternativeName>
        <fullName>Olfactory receptor OR9-3</fullName>
    </alternativeName>
</protein>
<evidence type="ECO:0000255" key="1"/>
<evidence type="ECO:0000255" key="2">
    <source>
        <dbReference type="PROSITE-ProRule" id="PRU00521"/>
    </source>
</evidence>
<evidence type="ECO:0000305" key="3"/>
<comment type="function">
    <text evidence="3">Odorant receptor.</text>
</comment>
<comment type="subcellular location">
    <subcellularLocation>
        <location>Cell membrane</location>
        <topology>Multi-pass membrane protein</topology>
    </subcellularLocation>
</comment>
<comment type="similarity">
    <text evidence="2">Belongs to the G-protein coupled receptor 1 family.</text>
</comment>
<comment type="online information" name="Human Olfactory Receptor Data Exploratorium (HORDE)">
    <link uri="http://genome.weizmann.ac.il/horde/card/index/symbol:OR2S2"/>
</comment>
<dbReference type="EMBL" id="AL135841">
    <property type="status" value="NOT_ANNOTATED_CDS"/>
    <property type="molecule type" value="Genomic_DNA"/>
</dbReference>
<dbReference type="EMBL" id="BC104869">
    <property type="protein sequence ID" value="AAI04870.1"/>
    <property type="molecule type" value="mRNA"/>
</dbReference>
<dbReference type="EMBL" id="BC113651">
    <property type="protein sequence ID" value="AAI13652.1"/>
    <property type="molecule type" value="mRNA"/>
</dbReference>
<dbReference type="EMBL" id="AF399601">
    <property type="protein sequence ID" value="AAK95086.1"/>
    <property type="molecule type" value="Genomic_DNA"/>
</dbReference>
<dbReference type="EMBL" id="BK004443">
    <property type="protein sequence ID" value="DAA04841.1"/>
    <property type="molecule type" value="Genomic_DNA"/>
</dbReference>
<dbReference type="CCDS" id="CCDS6596.2"/>
<dbReference type="RefSeq" id="NP_063950.2">
    <property type="nucleotide sequence ID" value="NM_019897.2"/>
</dbReference>
<dbReference type="SMR" id="Q9NQN1"/>
<dbReference type="BioGRID" id="121169">
    <property type="interactions" value="2"/>
</dbReference>
<dbReference type="FunCoup" id="Q9NQN1">
    <property type="interactions" value="450"/>
</dbReference>
<dbReference type="IntAct" id="Q9NQN1">
    <property type="interactions" value="1"/>
</dbReference>
<dbReference type="STRING" id="9606.ENSP00000344040"/>
<dbReference type="GlyCosmos" id="Q9NQN1">
    <property type="glycosylation" value="1 site, No reported glycans"/>
</dbReference>
<dbReference type="GlyGen" id="Q9NQN1">
    <property type="glycosylation" value="1 site"/>
</dbReference>
<dbReference type="iPTMnet" id="Q9NQN1"/>
<dbReference type="PhosphoSitePlus" id="Q9NQN1"/>
<dbReference type="BioMuta" id="OR2S2"/>
<dbReference type="DMDM" id="14423818"/>
<dbReference type="MassIVE" id="Q9NQN1"/>
<dbReference type="PaxDb" id="9606-ENSP00000485066"/>
<dbReference type="Antibodypedia" id="79068">
    <property type="antibodies" value="31 antibodies from 15 providers"/>
</dbReference>
<dbReference type="DNASU" id="56656"/>
<dbReference type="Ensembl" id="ENST00000341959.2">
    <property type="protein sequence ID" value="ENSP00000344040.2"/>
    <property type="gene ID" value="ENSG00000278889.4"/>
</dbReference>
<dbReference type="GeneID" id="56656"/>
<dbReference type="KEGG" id="hsa:56656"/>
<dbReference type="MANE-Select" id="ENST00000341959.2">
    <property type="protein sequence ID" value="ENSP00000344040.2"/>
    <property type="RefSeq nucleotide sequence ID" value="NM_019897.2"/>
    <property type="RefSeq protein sequence ID" value="NP_063950.2"/>
</dbReference>
<dbReference type="UCSC" id="uc011lpi.2">
    <property type="organism name" value="human"/>
</dbReference>
<dbReference type="AGR" id="HGNC:8276"/>
<dbReference type="CTD" id="56656"/>
<dbReference type="GeneCards" id="OR2S2"/>
<dbReference type="HGNC" id="HGNC:8276">
    <property type="gene designation" value="OR2S2"/>
</dbReference>
<dbReference type="HPA" id="ENSG00000278889">
    <property type="expression patterns" value="Not detected"/>
</dbReference>
<dbReference type="neXtProt" id="NX_Q9NQN1"/>
<dbReference type="PharmGKB" id="PA32200"/>
<dbReference type="VEuPathDB" id="HostDB:ENSG00000278889"/>
<dbReference type="eggNOG" id="ENOG502TDYB">
    <property type="taxonomic scope" value="Eukaryota"/>
</dbReference>
<dbReference type="GeneTree" id="ENSGT01040000240406"/>
<dbReference type="HOGENOM" id="CLU_012526_0_1_1"/>
<dbReference type="InParanoid" id="Q9NQN1"/>
<dbReference type="OMA" id="SQKCFRR"/>
<dbReference type="OrthoDB" id="6144223at2759"/>
<dbReference type="PAN-GO" id="Q9NQN1">
    <property type="GO annotations" value="0 GO annotations based on evolutionary models"/>
</dbReference>
<dbReference type="PhylomeDB" id="Q9NQN1"/>
<dbReference type="TreeFam" id="TF352686"/>
<dbReference type="PathwayCommons" id="Q9NQN1"/>
<dbReference type="Reactome" id="R-HSA-381753">
    <property type="pathway name" value="Olfactory Signaling Pathway"/>
</dbReference>
<dbReference type="Reactome" id="R-HSA-9752946">
    <property type="pathway name" value="Expression and translocation of olfactory receptors"/>
</dbReference>
<dbReference type="SignaLink" id="Q9NQN1"/>
<dbReference type="BioGRID-ORCS" id="56656">
    <property type="hits" value="12 hits in 744 CRISPR screens"/>
</dbReference>
<dbReference type="GeneWiki" id="OR2S2"/>
<dbReference type="GenomeRNAi" id="56656"/>
<dbReference type="Pharos" id="Q9NQN1">
    <property type="development level" value="Tdark"/>
</dbReference>
<dbReference type="PRO" id="PR:Q9NQN1"/>
<dbReference type="Proteomes" id="UP000005640">
    <property type="component" value="Chromosome 9"/>
</dbReference>
<dbReference type="RNAct" id="Q9NQN1">
    <property type="molecule type" value="protein"/>
</dbReference>
<dbReference type="Bgee" id="ENSG00000278889">
    <property type="expression patterns" value="Expressed in colonic mucosa and 4 other cell types or tissues"/>
</dbReference>
<dbReference type="GO" id="GO:0016020">
    <property type="term" value="C:membrane"/>
    <property type="evidence" value="ECO:0000303"/>
    <property type="project" value="UniProtKB"/>
</dbReference>
<dbReference type="GO" id="GO:0005886">
    <property type="term" value="C:plasma membrane"/>
    <property type="evidence" value="ECO:0000318"/>
    <property type="project" value="GO_Central"/>
</dbReference>
<dbReference type="GO" id="GO:0004930">
    <property type="term" value="F:G protein-coupled receptor activity"/>
    <property type="evidence" value="ECO:0007669"/>
    <property type="project" value="UniProtKB-KW"/>
</dbReference>
<dbReference type="GO" id="GO:0004984">
    <property type="term" value="F:olfactory receptor activity"/>
    <property type="evidence" value="ECO:0000318"/>
    <property type="project" value="GO_Central"/>
</dbReference>
<dbReference type="GO" id="GO:0050911">
    <property type="term" value="P:detection of chemical stimulus involved in sensory perception of smell"/>
    <property type="evidence" value="ECO:0000318"/>
    <property type="project" value="GO_Central"/>
</dbReference>
<dbReference type="GO" id="GO:0007608">
    <property type="term" value="P:sensory perception of smell"/>
    <property type="evidence" value="ECO:0000303"/>
    <property type="project" value="UniProtKB"/>
</dbReference>
<dbReference type="CDD" id="cd15430">
    <property type="entry name" value="7tmA_OR13-like"/>
    <property type="match status" value="1"/>
</dbReference>
<dbReference type="FunFam" id="1.10.1220.70:FF:000001">
    <property type="entry name" value="Olfactory receptor"/>
    <property type="match status" value="1"/>
</dbReference>
<dbReference type="FunFam" id="1.20.1070.10:FF:000501">
    <property type="entry name" value="Olfactory receptor"/>
    <property type="match status" value="1"/>
</dbReference>
<dbReference type="Gene3D" id="1.20.1070.10">
    <property type="entry name" value="Rhodopsin 7-helix transmembrane proteins"/>
    <property type="match status" value="1"/>
</dbReference>
<dbReference type="InterPro" id="IPR000276">
    <property type="entry name" value="GPCR_Rhodpsn"/>
</dbReference>
<dbReference type="InterPro" id="IPR017452">
    <property type="entry name" value="GPCR_Rhodpsn_7TM"/>
</dbReference>
<dbReference type="InterPro" id="IPR000725">
    <property type="entry name" value="Olfact_rcpt"/>
</dbReference>
<dbReference type="PANTHER" id="PTHR26453">
    <property type="entry name" value="OLFACTORY RECEPTOR"/>
    <property type="match status" value="1"/>
</dbReference>
<dbReference type="Pfam" id="PF13853">
    <property type="entry name" value="7tm_4"/>
    <property type="match status" value="1"/>
</dbReference>
<dbReference type="PRINTS" id="PR00237">
    <property type="entry name" value="GPCRRHODOPSN"/>
</dbReference>
<dbReference type="PRINTS" id="PR00245">
    <property type="entry name" value="OLFACTORYR"/>
</dbReference>
<dbReference type="SUPFAM" id="SSF81321">
    <property type="entry name" value="Family A G protein-coupled receptor-like"/>
    <property type="match status" value="1"/>
</dbReference>
<dbReference type="PROSITE" id="PS00237">
    <property type="entry name" value="G_PROTEIN_RECEP_F1_1"/>
    <property type="match status" value="1"/>
</dbReference>
<dbReference type="PROSITE" id="PS50262">
    <property type="entry name" value="G_PROTEIN_RECEP_F1_2"/>
    <property type="match status" value="1"/>
</dbReference>
<proteinExistence type="evidence at transcript level"/>
<gene>
    <name type="primary">OR2S2</name>
</gene>
<sequence>MEKANETSPVMGFVLLRLSAHPELEKTFFVLILLMYLVILLGNGVLILVTILDSRLHTPMYFFLGNLSFLDICFTTSSVPLVLDSFLTPQETISFSACAVQMALSFAMAGTECLLLSMMAFDRYVAICNPLRYSVIMSKAAYMPMAASSWAIGGAASVVHTSLAIQLPFCGDNVINHFTCEILAVLKLACADISINVISMEVTNVIFLGVPVLFISFSYVFIITTILRIPSAEGRKKVFSTCSAHLTVVIVFYGTLFFMYGKPKSKDSMGADKEDLSDKLIPLFYGVVTPMLNPIIYSLRNKDVKAAVRRLLRPKGFTQ</sequence>
<feature type="chain" id="PRO_0000150495" description="Olfactory receptor 2S2">
    <location>
        <begin position="1"/>
        <end position="319"/>
    </location>
</feature>
<feature type="topological domain" description="Extracellular" evidence="1">
    <location>
        <begin position="1"/>
        <end position="26"/>
    </location>
</feature>
<feature type="transmembrane region" description="Helical; Name=1" evidence="1">
    <location>
        <begin position="27"/>
        <end position="50"/>
    </location>
</feature>
<feature type="topological domain" description="Cytoplasmic" evidence="1">
    <location>
        <begin position="51"/>
        <end position="58"/>
    </location>
</feature>
<feature type="transmembrane region" description="Helical; Name=2" evidence="1">
    <location>
        <begin position="59"/>
        <end position="80"/>
    </location>
</feature>
<feature type="topological domain" description="Extracellular" evidence="1">
    <location>
        <begin position="81"/>
        <end position="101"/>
    </location>
</feature>
<feature type="transmembrane region" description="Helical; Name=3" evidence="1">
    <location>
        <begin position="102"/>
        <end position="121"/>
    </location>
</feature>
<feature type="topological domain" description="Cytoplasmic" evidence="1">
    <location>
        <begin position="122"/>
        <end position="140"/>
    </location>
</feature>
<feature type="transmembrane region" description="Helical; Name=4" evidence="1">
    <location>
        <begin position="141"/>
        <end position="159"/>
    </location>
</feature>
<feature type="topological domain" description="Extracellular" evidence="1">
    <location>
        <begin position="160"/>
        <end position="196"/>
    </location>
</feature>
<feature type="transmembrane region" description="Helical; Name=5" evidence="1">
    <location>
        <begin position="197"/>
        <end position="220"/>
    </location>
</feature>
<feature type="topological domain" description="Cytoplasmic" evidence="1">
    <location>
        <begin position="221"/>
        <end position="237"/>
    </location>
</feature>
<feature type="transmembrane region" description="Helical; Name=6" evidence="1">
    <location>
        <begin position="238"/>
        <end position="260"/>
    </location>
</feature>
<feature type="topological domain" description="Extracellular" evidence="1">
    <location>
        <begin position="261"/>
        <end position="279"/>
    </location>
</feature>
<feature type="transmembrane region" description="Helical; Name=7" evidence="1">
    <location>
        <begin position="280"/>
        <end position="299"/>
    </location>
</feature>
<feature type="topological domain" description="Cytoplasmic" evidence="1">
    <location>
        <begin position="300"/>
        <end position="319"/>
    </location>
</feature>
<feature type="glycosylation site" description="N-linked (GlcNAc...) asparagine" evidence="1">
    <location>
        <position position="5"/>
    </location>
</feature>
<feature type="disulfide bond" evidence="2">
    <location>
        <begin position="98"/>
        <end position="190"/>
    </location>
</feature>
<feature type="sequence variant" id="VAR_059994" description="In dbSNP:rs2233558.">
    <original>R</original>
    <variation>G</variation>
    <location>
        <position position="17"/>
    </location>
</feature>
<feature type="sequence variant" id="VAR_059995" description="In dbSNP:rs2233559.">
    <original>V</original>
    <variation>M</variation>
    <location>
        <position position="30"/>
    </location>
</feature>
<feature type="sequence variant" id="VAR_059996" description="In dbSNP:rs2233560.">
    <original>P</original>
    <variation>S</variation>
    <location>
        <position position="89"/>
    </location>
</feature>
<feature type="sequence variant" id="VAR_059997" description="In dbSNP:rs2233563.">
    <original>R</original>
    <variation>H</variation>
    <location>
        <position position="123"/>
    </location>
</feature>
<feature type="sequence variant" id="VAR_059998" description="In dbSNP:rs2233564.">
    <original>M</original>
    <variation>V</variation>
    <location>
        <position position="143"/>
    </location>
</feature>
<feature type="sequence variant" id="VAR_059999" description="In dbSNP:rs2233565.">
    <original>T</original>
    <variation>A</variation>
    <location>
        <position position="161"/>
    </location>
</feature>
<feature type="sequence variant" id="VAR_060000" description="In dbSNP:rs2233570.">
    <original>V</original>
    <variation>A</variation>
    <location>
        <position position="287"/>
    </location>
</feature>